<name>Y012_MYCGE</name>
<accession>P47258</accession>
<feature type="chain" id="PRO_0000205506" description="Uncharacterized protein MG012">
    <location>
        <begin position="1"/>
        <end position="287"/>
    </location>
</feature>
<feature type="domain" description="ATP-grasp" evidence="2">
    <location>
        <begin position="115"/>
        <end position="287"/>
    </location>
</feature>
<feature type="binding site" evidence="1">
    <location>
        <position position="145"/>
    </location>
    <ligand>
        <name>ATP</name>
        <dbReference type="ChEBI" id="CHEBI:30616"/>
    </ligand>
</feature>
<feature type="binding site" evidence="2">
    <location>
        <begin position="178"/>
        <end position="188"/>
    </location>
    <ligand>
        <name>ATP</name>
        <dbReference type="ChEBI" id="CHEBI:30616"/>
    </ligand>
</feature>
<feature type="binding site" evidence="2">
    <location>
        <position position="248"/>
    </location>
    <ligand>
        <name>Mg(2+)</name>
        <dbReference type="ChEBI" id="CHEBI:18420"/>
        <label>1</label>
    </ligand>
</feature>
<feature type="binding site" evidence="2">
    <location>
        <position position="248"/>
    </location>
    <ligand>
        <name>Mn(2+)</name>
        <dbReference type="ChEBI" id="CHEBI:29035"/>
        <label>1</label>
    </ligand>
</feature>
<feature type="binding site" evidence="2">
    <location>
        <position position="261"/>
    </location>
    <ligand>
        <name>Mg(2+)</name>
        <dbReference type="ChEBI" id="CHEBI:18420"/>
        <label>1</label>
    </ligand>
</feature>
<feature type="binding site" evidence="2">
    <location>
        <position position="261"/>
    </location>
    <ligand>
        <name>Mg(2+)</name>
        <dbReference type="ChEBI" id="CHEBI:18420"/>
        <label>2</label>
    </ligand>
</feature>
<feature type="binding site" evidence="2">
    <location>
        <position position="261"/>
    </location>
    <ligand>
        <name>Mn(2+)</name>
        <dbReference type="ChEBI" id="CHEBI:29035"/>
        <label>1</label>
    </ligand>
</feature>
<feature type="binding site" evidence="2">
    <location>
        <position position="261"/>
    </location>
    <ligand>
        <name>Mn(2+)</name>
        <dbReference type="ChEBI" id="CHEBI:29035"/>
        <label>2</label>
    </ligand>
</feature>
<feature type="binding site" evidence="2">
    <location>
        <position position="263"/>
    </location>
    <ligand>
        <name>Mg(2+)</name>
        <dbReference type="ChEBI" id="CHEBI:18420"/>
        <label>2</label>
    </ligand>
</feature>
<feature type="binding site" evidence="2">
    <location>
        <position position="263"/>
    </location>
    <ligand>
        <name>Mn(2+)</name>
        <dbReference type="ChEBI" id="CHEBI:29035"/>
        <label>2</label>
    </ligand>
</feature>
<proteinExistence type="inferred from homology"/>
<evidence type="ECO:0000255" key="1"/>
<evidence type="ECO:0000255" key="2">
    <source>
        <dbReference type="PROSITE-ProRule" id="PRU00409"/>
    </source>
</evidence>
<evidence type="ECO:0000305" key="3"/>
<organism>
    <name type="scientific">Mycoplasma genitalium (strain ATCC 33530 / DSM 19775 / NCTC 10195 / G37)</name>
    <name type="common">Mycoplasmoides genitalium</name>
    <dbReference type="NCBI Taxonomy" id="243273"/>
    <lineage>
        <taxon>Bacteria</taxon>
        <taxon>Bacillati</taxon>
        <taxon>Mycoplasmatota</taxon>
        <taxon>Mycoplasmoidales</taxon>
        <taxon>Mycoplasmoidaceae</taxon>
        <taxon>Mycoplasmoides</taxon>
    </lineage>
</organism>
<dbReference type="EMBL" id="L43967">
    <property type="protein sequence ID" value="AAC71228.1"/>
    <property type="molecule type" value="Genomic_DNA"/>
</dbReference>
<dbReference type="RefSeq" id="WP_010869289.1">
    <property type="nucleotide sequence ID" value="NC_000908.2"/>
</dbReference>
<dbReference type="SMR" id="P47258"/>
<dbReference type="STRING" id="243273.MG_012"/>
<dbReference type="GeneID" id="88282127"/>
<dbReference type="KEGG" id="mge:MG_012"/>
<dbReference type="eggNOG" id="COG0189">
    <property type="taxonomic scope" value="Bacteria"/>
</dbReference>
<dbReference type="HOGENOM" id="CLU_054353_0_2_14"/>
<dbReference type="InParanoid" id="P47258"/>
<dbReference type="OrthoDB" id="9786585at2"/>
<dbReference type="BioCyc" id="MGEN243273:G1GJ2-12-MONOMER"/>
<dbReference type="Proteomes" id="UP000000807">
    <property type="component" value="Chromosome"/>
</dbReference>
<dbReference type="GO" id="GO:0005737">
    <property type="term" value="C:cytoplasm"/>
    <property type="evidence" value="ECO:0000318"/>
    <property type="project" value="GO_Central"/>
</dbReference>
<dbReference type="GO" id="GO:0005524">
    <property type="term" value="F:ATP binding"/>
    <property type="evidence" value="ECO:0007669"/>
    <property type="project" value="UniProtKB-KW"/>
</dbReference>
<dbReference type="GO" id="GO:0046872">
    <property type="term" value="F:metal ion binding"/>
    <property type="evidence" value="ECO:0007669"/>
    <property type="project" value="UniProtKB-KW"/>
</dbReference>
<dbReference type="GO" id="GO:0018169">
    <property type="term" value="F:ribosomal S6-glutamic acid ligase activity"/>
    <property type="evidence" value="ECO:0000318"/>
    <property type="project" value="GO_Central"/>
</dbReference>
<dbReference type="GO" id="GO:0036211">
    <property type="term" value="P:protein modification process"/>
    <property type="evidence" value="ECO:0007669"/>
    <property type="project" value="InterPro"/>
</dbReference>
<dbReference type="GO" id="GO:0009432">
    <property type="term" value="P:SOS response"/>
    <property type="evidence" value="ECO:0000318"/>
    <property type="project" value="GO_Central"/>
</dbReference>
<dbReference type="Gene3D" id="3.40.50.20">
    <property type="match status" value="1"/>
</dbReference>
<dbReference type="Gene3D" id="3.30.1490.20">
    <property type="entry name" value="ATP-grasp fold, A domain"/>
    <property type="match status" value="1"/>
</dbReference>
<dbReference type="Gene3D" id="3.30.470.20">
    <property type="entry name" value="ATP-grasp fold, B domain"/>
    <property type="match status" value="1"/>
</dbReference>
<dbReference type="InterPro" id="IPR011761">
    <property type="entry name" value="ATP-grasp"/>
</dbReference>
<dbReference type="InterPro" id="IPR013651">
    <property type="entry name" value="ATP-grasp_RimK-type"/>
</dbReference>
<dbReference type="InterPro" id="IPR013815">
    <property type="entry name" value="ATP_grasp_subdomain_1"/>
</dbReference>
<dbReference type="InterPro" id="IPR004666">
    <property type="entry name" value="Rp_bS6_RimK/Lys_biosynth_LsyX"/>
</dbReference>
<dbReference type="NCBIfam" id="TIGR00768">
    <property type="entry name" value="rimK_fam"/>
    <property type="match status" value="1"/>
</dbReference>
<dbReference type="PANTHER" id="PTHR21621:SF0">
    <property type="entry name" value="BETA-CITRYLGLUTAMATE SYNTHASE B-RELATED"/>
    <property type="match status" value="1"/>
</dbReference>
<dbReference type="PANTHER" id="PTHR21621">
    <property type="entry name" value="RIBOSOMAL PROTEIN S6 MODIFICATION PROTEIN"/>
    <property type="match status" value="1"/>
</dbReference>
<dbReference type="Pfam" id="PF08443">
    <property type="entry name" value="RimK"/>
    <property type="match status" value="1"/>
</dbReference>
<dbReference type="SUPFAM" id="SSF56059">
    <property type="entry name" value="Glutathione synthetase ATP-binding domain-like"/>
    <property type="match status" value="1"/>
</dbReference>
<dbReference type="PROSITE" id="PS50975">
    <property type="entry name" value="ATP_GRASP"/>
    <property type="match status" value="1"/>
</dbReference>
<keyword id="KW-0067">ATP-binding</keyword>
<keyword id="KW-0460">Magnesium</keyword>
<keyword id="KW-0464">Manganese</keyword>
<keyword id="KW-0479">Metal-binding</keyword>
<keyword id="KW-0547">Nucleotide-binding</keyword>
<keyword id="KW-1185">Reference proteome</keyword>
<reference key="1">
    <citation type="journal article" date="1995" name="Science">
        <title>The minimal gene complement of Mycoplasma genitalium.</title>
        <authorList>
            <person name="Fraser C.M."/>
            <person name="Gocayne J.D."/>
            <person name="White O."/>
            <person name="Adams M.D."/>
            <person name="Clayton R.A."/>
            <person name="Fleischmann R.D."/>
            <person name="Bult C.J."/>
            <person name="Kerlavage A.R."/>
            <person name="Sutton G.G."/>
            <person name="Kelley J.M."/>
            <person name="Fritchman J.L."/>
            <person name="Weidman J.F."/>
            <person name="Small K.V."/>
            <person name="Sandusky M."/>
            <person name="Fuhrmann J.L."/>
            <person name="Nguyen D.T."/>
            <person name="Utterback T.R."/>
            <person name="Saudek D.M."/>
            <person name="Phillips C.A."/>
            <person name="Merrick J.M."/>
            <person name="Tomb J.-F."/>
            <person name="Dougherty B.A."/>
            <person name="Bott K.F."/>
            <person name="Hu P.-C."/>
            <person name="Lucier T.S."/>
            <person name="Peterson S.N."/>
            <person name="Smith H.O."/>
            <person name="Hutchison C.A. III"/>
            <person name="Venter J.C."/>
        </authorList>
    </citation>
    <scope>NUCLEOTIDE SEQUENCE [LARGE SCALE GENOMIC DNA]</scope>
    <source>
        <strain>ATCC 33530 / DSM 19775 / NCTC 10195 / G37</strain>
    </source>
</reference>
<sequence length="287" mass="32733">MKKINVVYNPAFNPISSKLNQTQLLKNASEELDIELKFFTSFDINTTKAKANLPFISNKILFMDKNIALARWLESNGFEVINSSIGINNADNKGLSHAIIAQYPFIKQIKTLLGPQNFDREWNPVMLDVFINQIKQSMEFPVIVKSVFGSFGDYVFLCLDEQKLRKTLMSFNQQAIVQKYITCSKGESVRVIVVNNKVIGALHTTNNSDFRSNLNKGAKAERFFLNKEQENLAVKISKVMQLFYCGIDFLFDQDRSLIFCEVNPNVQLTRSSMYLNTNLAIELLKAI</sequence>
<comment type="similarity">
    <text evidence="3">Belongs to the RimK family.</text>
</comment>
<protein>
    <recommendedName>
        <fullName>Uncharacterized protein MG012</fullName>
    </recommendedName>
</protein>
<gene>
    <name type="ordered locus">MG012</name>
</gene>